<keyword id="KW-0025">Alternative splicing</keyword>
<keyword id="KW-0238">DNA-binding</keyword>
<keyword id="KW-0479">Metal-binding</keyword>
<keyword id="KW-0539">Nucleus</keyword>
<keyword id="KW-0675">Receptor</keyword>
<keyword id="KW-1185">Reference proteome</keyword>
<keyword id="KW-0804">Transcription</keyword>
<keyword id="KW-0805">Transcription regulation</keyword>
<keyword id="KW-0862">Zinc</keyword>
<keyword id="KW-0863">Zinc-finger</keyword>
<sequence length="411" mass="45482">MAMVVSVWRDPQEDVAGGPPSGPNPAAQPAREQQQAASAAPHTPQTPSQPGPPSTPGTAGDKGSQNSGQSQQHIECVVCGDKSSGKHYGQFTCEGCKSFFKRSVRRNLTYTCRANRNCPIDQHHRNQCQYCRLKKCLKVGMRREAVQRGRMPPTQPNPGQYALTNGDPLNGHCYLSGYISLLLRAEPYPTSRYGSQCMQPNNIMGIENICELAARLLFSAVEWARNIPFFPDLQITDQVSLLRLTWSELFVLNAAQCSMPLHVAPLLAAAGLHASPMSADRVVAFMDHIRIFQEQVEKLKALHVDSAEYSCIKAIVLFTSDACGLSDAAHIESLQEKSQCALEEYVRSQYPNQPSRFGKLLLRLPSLRTVSSSVIEQLFFVRLVGKTPIETLIRDMLLSGSSFNWPYMSIQ</sequence>
<proteinExistence type="evidence at transcript level"/>
<organism>
    <name type="scientific">Danio rerio</name>
    <name type="common">Zebrafish</name>
    <name type="synonym">Brachydanio rerio</name>
    <dbReference type="NCBI Taxonomy" id="7955"/>
    <lineage>
        <taxon>Eukaryota</taxon>
        <taxon>Metazoa</taxon>
        <taxon>Chordata</taxon>
        <taxon>Craniata</taxon>
        <taxon>Vertebrata</taxon>
        <taxon>Euteleostomi</taxon>
        <taxon>Actinopterygii</taxon>
        <taxon>Neopterygii</taxon>
        <taxon>Teleostei</taxon>
        <taxon>Ostariophysi</taxon>
        <taxon>Cypriniformes</taxon>
        <taxon>Danionidae</taxon>
        <taxon>Danioninae</taxon>
        <taxon>Danio</taxon>
    </lineage>
</organism>
<evidence type="ECO:0000255" key="1">
    <source>
        <dbReference type="PROSITE-ProRule" id="PRU00407"/>
    </source>
</evidence>
<evidence type="ECO:0000255" key="2">
    <source>
        <dbReference type="PROSITE-ProRule" id="PRU01189"/>
    </source>
</evidence>
<evidence type="ECO:0000256" key="3">
    <source>
        <dbReference type="SAM" id="MobiDB-lite"/>
    </source>
</evidence>
<evidence type="ECO:0000269" key="4">
    <source>
    </source>
</evidence>
<evidence type="ECO:0000269" key="5">
    <source>
    </source>
</evidence>
<evidence type="ECO:0000269" key="6">
    <source>
    </source>
</evidence>
<evidence type="ECO:0000303" key="7">
    <source ref="3"/>
</evidence>
<evidence type="ECO:0000305" key="8"/>
<protein>
    <recommendedName>
        <fullName>Nuclear receptor subfamily 2 group F member 1-A</fullName>
    </recommendedName>
    <alternativeName>
        <fullName>COUP transcription factor 1-A</fullName>
        <shortName>COUP-TFalpha-A</shortName>
        <shortName>zCOUP-TFI</shortName>
    </alternativeName>
    <alternativeName>
        <fullName>Seven-up related 44</fullName>
        <shortName>Svp[44]</shortName>
        <shortName>zSvp[44]</shortName>
    </alternativeName>
    <alternativeName>
        <fullName>Steroid receptor homolog SVP 44</fullName>
    </alternativeName>
</protein>
<feature type="chain" id="PRO_0000053604" description="Nuclear receptor subfamily 2 group F member 1-A">
    <location>
        <begin position="1"/>
        <end position="411"/>
    </location>
</feature>
<feature type="domain" description="NR LBD" evidence="2">
    <location>
        <begin position="174"/>
        <end position="400"/>
    </location>
</feature>
<feature type="DNA-binding region" description="Nuclear receptor" evidence="1">
    <location>
        <begin position="73"/>
        <end position="148"/>
    </location>
</feature>
<feature type="zinc finger region" description="NR C4-type" evidence="1">
    <location>
        <begin position="76"/>
        <end position="96"/>
    </location>
</feature>
<feature type="zinc finger region" description="NR C4-type" evidence="1">
    <location>
        <begin position="112"/>
        <end position="136"/>
    </location>
</feature>
<feature type="region of interest" description="Disordered" evidence="3">
    <location>
        <begin position="1"/>
        <end position="68"/>
    </location>
</feature>
<feature type="compositionally biased region" description="Low complexity" evidence="3">
    <location>
        <begin position="24"/>
        <end position="46"/>
    </location>
</feature>
<feature type="splice variant" id="VSP_036605" description="In isoform 3." evidence="8">
    <location>
        <position position="144"/>
    </location>
</feature>
<feature type="splice variant" id="VSP_036606" description="In isoform 2." evidence="7">
    <location>
        <position position="145"/>
    </location>
</feature>
<feature type="sequence conflict" description="In Ref. 4; AAB68740." evidence="8" ref="4">
    <original>S</original>
    <variation>C</variation>
    <location>
        <position position="98"/>
    </location>
</feature>
<feature type="sequence conflict" description="In Ref. 4; AAB68740." evidence="8" ref="4">
    <original>R</original>
    <variation>S</variation>
    <location>
        <position position="132"/>
    </location>
</feature>
<name>N2F1A_DANRE</name>
<reference key="1">
    <citation type="journal article" date="1993" name="EMBO J.">
        <title>Functional conservation of vertebrate seven-up related genes in neurogenesis and eye development.</title>
        <authorList>
            <person name="Fjose A."/>
            <person name="Nornes S."/>
            <person name="Weber U."/>
            <person name="Mlodzik M."/>
        </authorList>
    </citation>
    <scope>NUCLEOTIDE SEQUENCE [MRNA] (ISOFORM 1)</scope>
    <scope>FUNCTION</scope>
    <scope>TISSUE SPECIFICITY</scope>
    <source>
        <tissue>Embryo</tissue>
    </source>
</reference>
<reference key="2">
    <citation type="journal article" date="2013" name="Nature">
        <title>The zebrafish reference genome sequence and its relationship to the human genome.</title>
        <authorList>
            <person name="Howe K."/>
            <person name="Clark M.D."/>
            <person name="Torroja C.F."/>
            <person name="Torrance J."/>
            <person name="Berthelot C."/>
            <person name="Muffato M."/>
            <person name="Collins J.E."/>
            <person name="Humphray S."/>
            <person name="McLaren K."/>
            <person name="Matthews L."/>
            <person name="McLaren S."/>
            <person name="Sealy I."/>
            <person name="Caccamo M."/>
            <person name="Churcher C."/>
            <person name="Scott C."/>
            <person name="Barrett J.C."/>
            <person name="Koch R."/>
            <person name="Rauch G.J."/>
            <person name="White S."/>
            <person name="Chow W."/>
            <person name="Kilian B."/>
            <person name="Quintais L.T."/>
            <person name="Guerra-Assuncao J.A."/>
            <person name="Zhou Y."/>
            <person name="Gu Y."/>
            <person name="Yen J."/>
            <person name="Vogel J.H."/>
            <person name="Eyre T."/>
            <person name="Redmond S."/>
            <person name="Banerjee R."/>
            <person name="Chi J."/>
            <person name="Fu B."/>
            <person name="Langley E."/>
            <person name="Maguire S.F."/>
            <person name="Laird G.K."/>
            <person name="Lloyd D."/>
            <person name="Kenyon E."/>
            <person name="Donaldson S."/>
            <person name="Sehra H."/>
            <person name="Almeida-King J."/>
            <person name="Loveland J."/>
            <person name="Trevanion S."/>
            <person name="Jones M."/>
            <person name="Quail M."/>
            <person name="Willey D."/>
            <person name="Hunt A."/>
            <person name="Burton J."/>
            <person name="Sims S."/>
            <person name="McLay K."/>
            <person name="Plumb B."/>
            <person name="Davis J."/>
            <person name="Clee C."/>
            <person name="Oliver K."/>
            <person name="Clark R."/>
            <person name="Riddle C."/>
            <person name="Elliot D."/>
            <person name="Threadgold G."/>
            <person name="Harden G."/>
            <person name="Ware D."/>
            <person name="Begum S."/>
            <person name="Mortimore B."/>
            <person name="Kerry G."/>
            <person name="Heath P."/>
            <person name="Phillimore B."/>
            <person name="Tracey A."/>
            <person name="Corby N."/>
            <person name="Dunn M."/>
            <person name="Johnson C."/>
            <person name="Wood J."/>
            <person name="Clark S."/>
            <person name="Pelan S."/>
            <person name="Griffiths G."/>
            <person name="Smith M."/>
            <person name="Glithero R."/>
            <person name="Howden P."/>
            <person name="Barker N."/>
            <person name="Lloyd C."/>
            <person name="Stevens C."/>
            <person name="Harley J."/>
            <person name="Holt K."/>
            <person name="Panagiotidis G."/>
            <person name="Lovell J."/>
            <person name="Beasley H."/>
            <person name="Henderson C."/>
            <person name="Gordon D."/>
            <person name="Auger K."/>
            <person name="Wright D."/>
            <person name="Collins J."/>
            <person name="Raisen C."/>
            <person name="Dyer L."/>
            <person name="Leung K."/>
            <person name="Robertson L."/>
            <person name="Ambridge K."/>
            <person name="Leongamornlert D."/>
            <person name="McGuire S."/>
            <person name="Gilderthorp R."/>
            <person name="Griffiths C."/>
            <person name="Manthravadi D."/>
            <person name="Nichol S."/>
            <person name="Barker G."/>
            <person name="Whitehead S."/>
            <person name="Kay M."/>
            <person name="Brown J."/>
            <person name="Murnane C."/>
            <person name="Gray E."/>
            <person name="Humphries M."/>
            <person name="Sycamore N."/>
            <person name="Barker D."/>
            <person name="Saunders D."/>
            <person name="Wallis J."/>
            <person name="Babbage A."/>
            <person name="Hammond S."/>
            <person name="Mashreghi-Mohammadi M."/>
            <person name="Barr L."/>
            <person name="Martin S."/>
            <person name="Wray P."/>
            <person name="Ellington A."/>
            <person name="Matthews N."/>
            <person name="Ellwood M."/>
            <person name="Woodmansey R."/>
            <person name="Clark G."/>
            <person name="Cooper J."/>
            <person name="Tromans A."/>
            <person name="Grafham D."/>
            <person name="Skuce C."/>
            <person name="Pandian R."/>
            <person name="Andrews R."/>
            <person name="Harrison E."/>
            <person name="Kimberley A."/>
            <person name="Garnett J."/>
            <person name="Fosker N."/>
            <person name="Hall R."/>
            <person name="Garner P."/>
            <person name="Kelly D."/>
            <person name="Bird C."/>
            <person name="Palmer S."/>
            <person name="Gehring I."/>
            <person name="Berger A."/>
            <person name="Dooley C.M."/>
            <person name="Ersan-Urun Z."/>
            <person name="Eser C."/>
            <person name="Geiger H."/>
            <person name="Geisler M."/>
            <person name="Karotki L."/>
            <person name="Kirn A."/>
            <person name="Konantz J."/>
            <person name="Konantz M."/>
            <person name="Oberlander M."/>
            <person name="Rudolph-Geiger S."/>
            <person name="Teucke M."/>
            <person name="Lanz C."/>
            <person name="Raddatz G."/>
            <person name="Osoegawa K."/>
            <person name="Zhu B."/>
            <person name="Rapp A."/>
            <person name="Widaa S."/>
            <person name="Langford C."/>
            <person name="Yang F."/>
            <person name="Schuster S.C."/>
            <person name="Carter N.P."/>
            <person name="Harrow J."/>
            <person name="Ning Z."/>
            <person name="Herrero J."/>
            <person name="Searle S.M."/>
            <person name="Enright A."/>
            <person name="Geisler R."/>
            <person name="Plasterk R.H."/>
            <person name="Lee C."/>
            <person name="Westerfield M."/>
            <person name="de Jong P.J."/>
            <person name="Zon L.I."/>
            <person name="Postlethwait J.H."/>
            <person name="Nusslein-Volhard C."/>
            <person name="Hubbard T.J."/>
            <person name="Roest Crollius H."/>
            <person name="Rogers J."/>
            <person name="Stemple D.L."/>
        </authorList>
    </citation>
    <scope>NUCLEOTIDE SEQUENCE [LARGE SCALE GENOMIC DNA]</scope>
    <source>
        <strain>Tuebingen</strain>
    </source>
</reference>
<reference key="3">
    <citation type="submission" date="2004-03" db="EMBL/GenBank/DDBJ databases">
        <authorList>
            <consortium name="NIH - Zebrafish Gene Collection (ZGC) project"/>
        </authorList>
    </citation>
    <scope>NUCLEOTIDE SEQUENCE [LARGE SCALE MRNA] (ISOFORMS 1 AND 2)</scope>
    <source>
        <tissue>Embryo</tissue>
    </source>
</reference>
<reference key="4">
    <citation type="journal article" date="1997" name="Proc. Natl. Acad. Sci. U.S.A.">
        <title>Ligand binding was acquired during evolution of nuclear receptors.</title>
        <authorList>
            <person name="Escriva H."/>
            <person name="Safi R."/>
            <person name="Haenni C."/>
            <person name="Langlois M.-C."/>
            <person name="Saumitou-Laprade P."/>
            <person name="Stehelin D."/>
            <person name="Capron A."/>
            <person name="Pierce R."/>
            <person name="Laudet V."/>
        </authorList>
    </citation>
    <scope>NUCLEOTIDE SEQUENCE [GENOMIC DNA] OF 94-133</scope>
</reference>
<reference key="5">
    <citation type="journal article" date="1995" name="Mech. Dev.">
        <title>A novel vertebrate svp-related nuclear receptor is expressed as a step gradient in developing rhombomeres and is affected by retinoic acid.</title>
        <authorList>
            <person name="Fjose A."/>
            <person name="Weber U."/>
            <person name="Mlodzik M."/>
        </authorList>
    </citation>
    <scope>TISSUE SPECIFICITY</scope>
</reference>
<reference key="6">
    <citation type="journal article" date="2007" name="PLoS Genet.">
        <title>Unexpected novel relational links uncovered by extensive developmental profiling of nuclear receptor expression.</title>
        <authorList>
            <person name="Bertrand S."/>
            <person name="Thisse B."/>
            <person name="Tavares R."/>
            <person name="Sachs L."/>
            <person name="Chaumot A."/>
            <person name="Bardet P.-L."/>
            <person name="Escriva H."/>
            <person name="Duffraisse M."/>
            <person name="Marchand O."/>
            <person name="Safi R."/>
            <person name="Thisse C."/>
            <person name="Laudet V."/>
        </authorList>
    </citation>
    <scope>TISSUE SPECIFICITY</scope>
</reference>
<reference key="7">
    <citation type="journal article" date="1997" name="Endocr. Rev.">
        <title>Chick ovalbumin upstream promoter-transcription factors (COUP-TFs): coming of age.</title>
        <authorList>
            <person name="Tsai S.Y."/>
            <person name="Tsai M.J."/>
        </authorList>
    </citation>
    <scope>REVIEW</scope>
</reference>
<gene>
    <name type="primary">nr2f1a</name>
    <name type="synonym">nr2f1</name>
    <name type="synonym">svp44</name>
    <name type="ORF">si:dkeyp-10a3.1</name>
</gene>
<dbReference type="EMBL" id="X70299">
    <property type="protein sequence ID" value="CAA49780.1"/>
    <property type="molecule type" value="mRNA"/>
</dbReference>
<dbReference type="EMBL" id="CR751602">
    <property type="protein sequence ID" value="CAM16573.1"/>
    <property type="molecule type" value="Genomic_DNA"/>
</dbReference>
<dbReference type="EMBL" id="BC056574">
    <property type="protein sequence ID" value="AAH56574.1"/>
    <property type="molecule type" value="mRNA"/>
</dbReference>
<dbReference type="EMBL" id="BC066671">
    <property type="protein sequence ID" value="AAH66671.1"/>
    <property type="molecule type" value="mRNA"/>
</dbReference>
<dbReference type="EMBL" id="U93463">
    <property type="protein sequence ID" value="AAB68740.1"/>
    <property type="molecule type" value="Genomic_DNA"/>
</dbReference>
<dbReference type="PIR" id="S35333">
    <property type="entry name" value="S35333"/>
</dbReference>
<dbReference type="RefSeq" id="NP_571255.1">
    <molecule id="Q06725-1"/>
    <property type="nucleotide sequence ID" value="NM_131180.1"/>
</dbReference>
<dbReference type="RefSeq" id="XP_005165564.1">
    <property type="nucleotide sequence ID" value="XM_005165507.3"/>
</dbReference>
<dbReference type="SMR" id="Q06725"/>
<dbReference type="FunCoup" id="Q06725">
    <property type="interactions" value="1019"/>
</dbReference>
<dbReference type="STRING" id="7955.ENSDARP00000116750"/>
<dbReference type="PaxDb" id="7955-ENSDARP00000116750"/>
<dbReference type="Ensembl" id="ENSDART00000133384">
    <molecule id="Q06725-1"/>
    <property type="protein sequence ID" value="ENSDARP00000116750"/>
    <property type="gene ID" value="ENSDARG00000052695"/>
</dbReference>
<dbReference type="GeneID" id="30418"/>
<dbReference type="KEGG" id="dre:30418"/>
<dbReference type="AGR" id="ZFIN:ZDB-GENE-980526-115"/>
<dbReference type="CTD" id="30418"/>
<dbReference type="ZFIN" id="ZDB-GENE-980526-115">
    <property type="gene designation" value="nr2f1a"/>
</dbReference>
<dbReference type="eggNOG" id="KOG3575">
    <property type="taxonomic scope" value="Eukaryota"/>
</dbReference>
<dbReference type="HOGENOM" id="CLU_007368_20_1_1"/>
<dbReference type="InParanoid" id="Q06725"/>
<dbReference type="OMA" id="QWKEEHR"/>
<dbReference type="OrthoDB" id="5873264at2759"/>
<dbReference type="PhylomeDB" id="Q06725"/>
<dbReference type="TreeFam" id="TF352097"/>
<dbReference type="PRO" id="PR:Q06725"/>
<dbReference type="Proteomes" id="UP000000437">
    <property type="component" value="Chromosome 5"/>
</dbReference>
<dbReference type="Bgee" id="ENSDARG00000052695">
    <property type="expression patterns" value="Expressed in larva and 70 other cell types or tissues"/>
</dbReference>
<dbReference type="GO" id="GO:0005634">
    <property type="term" value="C:nucleus"/>
    <property type="evidence" value="ECO:0007669"/>
    <property type="project" value="UniProtKB-SubCell"/>
</dbReference>
<dbReference type="GO" id="GO:0004879">
    <property type="term" value="F:nuclear receptor activity"/>
    <property type="evidence" value="ECO:0000318"/>
    <property type="project" value="GO_Central"/>
</dbReference>
<dbReference type="GO" id="GO:0000978">
    <property type="term" value="F:RNA polymerase II cis-regulatory region sequence-specific DNA binding"/>
    <property type="evidence" value="ECO:0000318"/>
    <property type="project" value="GO_Central"/>
</dbReference>
<dbReference type="GO" id="GO:0008270">
    <property type="term" value="F:zinc ion binding"/>
    <property type="evidence" value="ECO:0007669"/>
    <property type="project" value="UniProtKB-KW"/>
</dbReference>
<dbReference type="GO" id="GO:0055011">
    <property type="term" value="P:atrial cardiac muscle cell differentiation"/>
    <property type="evidence" value="ECO:0000315"/>
    <property type="project" value="ZFIN"/>
</dbReference>
<dbReference type="GO" id="GO:0035284">
    <property type="term" value="P:brain segmentation"/>
    <property type="evidence" value="ECO:0000315"/>
    <property type="project" value="ZFIN"/>
</dbReference>
<dbReference type="GO" id="GO:0003209">
    <property type="term" value="P:cardiac atrium morphogenesis"/>
    <property type="evidence" value="ECO:0000315"/>
    <property type="project" value="ZFIN"/>
</dbReference>
<dbReference type="GO" id="GO:0048738">
    <property type="term" value="P:cardiac muscle tissue development"/>
    <property type="evidence" value="ECO:0000315"/>
    <property type="project" value="ZFIN"/>
</dbReference>
<dbReference type="GO" id="GO:0030154">
    <property type="term" value="P:cell differentiation"/>
    <property type="evidence" value="ECO:0000318"/>
    <property type="project" value="GO_Central"/>
</dbReference>
<dbReference type="GO" id="GO:0001935">
    <property type="term" value="P:endothelial cell proliferation"/>
    <property type="evidence" value="ECO:0000315"/>
    <property type="project" value="ZFIN"/>
</dbReference>
<dbReference type="GO" id="GO:0000122">
    <property type="term" value="P:negative regulation of transcription by RNA polymerase II"/>
    <property type="evidence" value="ECO:0000318"/>
    <property type="project" value="GO_Central"/>
</dbReference>
<dbReference type="GO" id="GO:0007399">
    <property type="term" value="P:nervous system development"/>
    <property type="evidence" value="ECO:0000318"/>
    <property type="project" value="GO_Central"/>
</dbReference>
<dbReference type="GO" id="GO:0001944">
    <property type="term" value="P:vasculature development"/>
    <property type="evidence" value="ECO:0000315"/>
    <property type="project" value="ZFIN"/>
</dbReference>
<dbReference type="CDD" id="cd06958">
    <property type="entry name" value="NR_DBD_COUP_TF"/>
    <property type="match status" value="1"/>
</dbReference>
<dbReference type="CDD" id="cd06948">
    <property type="entry name" value="NR_LBD_COUP-TF"/>
    <property type="match status" value="1"/>
</dbReference>
<dbReference type="FunFam" id="1.10.565.10:FF:000003">
    <property type="entry name" value="Coup transcription factor 2 isoform 1"/>
    <property type="match status" value="1"/>
</dbReference>
<dbReference type="FunFam" id="3.30.50.10:FF:000016">
    <property type="entry name" value="Nuclear receptor subfamily 2 group F member 1"/>
    <property type="match status" value="1"/>
</dbReference>
<dbReference type="Gene3D" id="3.30.50.10">
    <property type="entry name" value="Erythroid Transcription Factor GATA-1, subunit A"/>
    <property type="match status" value="1"/>
</dbReference>
<dbReference type="Gene3D" id="1.10.565.10">
    <property type="entry name" value="Retinoid X Receptor"/>
    <property type="match status" value="1"/>
</dbReference>
<dbReference type="InterPro" id="IPR035500">
    <property type="entry name" value="NHR-like_dom_sf"/>
</dbReference>
<dbReference type="InterPro" id="IPR000536">
    <property type="entry name" value="Nucl_hrmn_rcpt_lig-bd"/>
</dbReference>
<dbReference type="InterPro" id="IPR050274">
    <property type="entry name" value="Nuclear_hormone_rcpt_NR2"/>
</dbReference>
<dbReference type="InterPro" id="IPR001723">
    <property type="entry name" value="Nuclear_hrmn_rcpt"/>
</dbReference>
<dbReference type="InterPro" id="IPR001628">
    <property type="entry name" value="Znf_hrmn_rcpt"/>
</dbReference>
<dbReference type="InterPro" id="IPR013088">
    <property type="entry name" value="Znf_NHR/GATA"/>
</dbReference>
<dbReference type="PANTHER" id="PTHR24083">
    <property type="entry name" value="NUCLEAR HORMONE RECEPTOR"/>
    <property type="match status" value="1"/>
</dbReference>
<dbReference type="Pfam" id="PF00104">
    <property type="entry name" value="Hormone_recep"/>
    <property type="match status" value="1"/>
</dbReference>
<dbReference type="Pfam" id="PF00105">
    <property type="entry name" value="zf-C4"/>
    <property type="match status" value="1"/>
</dbReference>
<dbReference type="PRINTS" id="PR01282">
    <property type="entry name" value="COUPTNFACTOR"/>
</dbReference>
<dbReference type="PRINTS" id="PR00398">
    <property type="entry name" value="STRDHORMONER"/>
</dbReference>
<dbReference type="PRINTS" id="PR00047">
    <property type="entry name" value="STROIDFINGER"/>
</dbReference>
<dbReference type="SMART" id="SM00430">
    <property type="entry name" value="HOLI"/>
    <property type="match status" value="1"/>
</dbReference>
<dbReference type="SMART" id="SM00399">
    <property type="entry name" value="ZnF_C4"/>
    <property type="match status" value="1"/>
</dbReference>
<dbReference type="SUPFAM" id="SSF57716">
    <property type="entry name" value="Glucocorticoid receptor-like (DNA-binding domain)"/>
    <property type="match status" value="1"/>
</dbReference>
<dbReference type="SUPFAM" id="SSF48508">
    <property type="entry name" value="Nuclear receptor ligand-binding domain"/>
    <property type="match status" value="1"/>
</dbReference>
<dbReference type="PROSITE" id="PS51843">
    <property type="entry name" value="NR_LBD"/>
    <property type="match status" value="1"/>
</dbReference>
<dbReference type="PROSITE" id="PS00031">
    <property type="entry name" value="NUCLEAR_REC_DBD_1"/>
    <property type="match status" value="1"/>
</dbReference>
<dbReference type="PROSITE" id="PS51030">
    <property type="entry name" value="NUCLEAR_REC_DBD_2"/>
    <property type="match status" value="1"/>
</dbReference>
<comment type="function">
    <text evidence="5">Putative transcription factor that is required in photoreceptor cells precursors during eye development.</text>
</comment>
<comment type="subcellular location">
    <subcellularLocation>
        <location evidence="1">Nucleus</location>
    </subcellularLocation>
</comment>
<comment type="alternative products">
    <event type="alternative splicing"/>
    <isoform>
        <id>Q06725-1</id>
        <name>1</name>
        <sequence type="displayed"/>
    </isoform>
    <isoform>
        <id>Q06725-2</id>
        <name>2</name>
        <sequence type="described" ref="VSP_036606"/>
    </isoform>
    <isoform>
        <id>Q06725-3</id>
        <name>3</name>
        <sequence type="described" ref="VSP_036605"/>
    </isoform>
</comment>
<comment type="tissue specificity">
    <text evidence="4 5 6">First expressed in 11-12 hour embryos. In the rostral brain of 13 hour embryos, expressed within the anterior half of the midbrain and the posterior part of the diencephalon. In the presumptive hindbrain, expressed in a segment-like stripe in the anterior region, resembling the presumptive rhombomere units of the hindbrain. Also detected in the intermediate mesoderm, posterior to the first somite. As somitogenesis proceeds, expression extends posteriorly and flanks the 10 most anterior somites. Expression changes extensively both in level and expansion of domains between 13 and 20 hours. In the rostral brain, expression extends to include a major part of the diencephalon and a caudal portion of the telencephalon. Within the hindbrain, strongly expressed in the two most anterior rhombomeres, and a lower but uniform expression is seen to extend throughout rhombomere 7. In 28 hour embryos, higher and more uniform expression is seen in both rostral and hindbrain areas. Also expressed in the retina of the eye.</text>
</comment>
<comment type="similarity">
    <text evidence="8">Belongs to the nuclear hormone receptor family. NR2 subfamily.</text>
</comment>
<accession>Q06725</accession>
<accession>A2CEQ1</accession>
<accession>O42536</accession>
<accession>Q6PHF2</accession>